<evidence type="ECO:0000250" key="1"/>
<evidence type="ECO:0000255" key="2">
    <source>
        <dbReference type="PROSITE-ProRule" id="PRU10001"/>
    </source>
</evidence>
<evidence type="ECO:0000305" key="3"/>
<name>ADH1_DROHY</name>
<dbReference type="EC" id="1.1.1.1"/>
<dbReference type="EMBL" id="X58694">
    <property type="protein sequence ID" value="CAA41540.1"/>
    <property type="molecule type" value="Genomic_DNA"/>
</dbReference>
<dbReference type="PIR" id="S15712">
    <property type="entry name" value="S15712"/>
</dbReference>
<dbReference type="SMR" id="P23236"/>
<dbReference type="OrthoDB" id="417891at2759"/>
<dbReference type="Proteomes" id="UP000504633">
    <property type="component" value="Unplaced"/>
</dbReference>
<dbReference type="GO" id="GO:0005737">
    <property type="term" value="C:cytoplasm"/>
    <property type="evidence" value="ECO:0007669"/>
    <property type="project" value="TreeGrafter"/>
</dbReference>
<dbReference type="GO" id="GO:0004022">
    <property type="term" value="F:alcohol dehydrogenase (NAD+) activity"/>
    <property type="evidence" value="ECO:0000250"/>
    <property type="project" value="UniProtKB"/>
</dbReference>
<dbReference type="GO" id="GO:0006066">
    <property type="term" value="P:alcohol metabolic process"/>
    <property type="evidence" value="ECO:0007669"/>
    <property type="project" value="InterPro"/>
</dbReference>
<dbReference type="CDD" id="cd05323">
    <property type="entry name" value="ADH_SDR_c_like"/>
    <property type="match status" value="1"/>
</dbReference>
<dbReference type="FunFam" id="3.40.50.720:FF:000302">
    <property type="entry name" value="Alcohol dehydrogenase"/>
    <property type="match status" value="1"/>
</dbReference>
<dbReference type="Gene3D" id="3.40.50.720">
    <property type="entry name" value="NAD(P)-binding Rossmann-like Domain"/>
    <property type="match status" value="1"/>
</dbReference>
<dbReference type="InterPro" id="IPR002425">
    <property type="entry name" value="ADH_Drosophila-type"/>
</dbReference>
<dbReference type="InterPro" id="IPR036291">
    <property type="entry name" value="NAD(P)-bd_dom_sf"/>
</dbReference>
<dbReference type="InterPro" id="IPR020904">
    <property type="entry name" value="Sc_DH/Rdtase_CS"/>
</dbReference>
<dbReference type="InterPro" id="IPR002347">
    <property type="entry name" value="SDR_fam"/>
</dbReference>
<dbReference type="PANTHER" id="PTHR44229">
    <property type="entry name" value="15-HYDROXYPROSTAGLANDIN DEHYDROGENASE [NAD(+)]"/>
    <property type="match status" value="1"/>
</dbReference>
<dbReference type="PANTHER" id="PTHR44229:SF8">
    <property type="entry name" value="ALCOHOL DEHYDROGENASE-RELATED"/>
    <property type="match status" value="1"/>
</dbReference>
<dbReference type="Pfam" id="PF00106">
    <property type="entry name" value="adh_short"/>
    <property type="match status" value="1"/>
</dbReference>
<dbReference type="PRINTS" id="PR01168">
    <property type="entry name" value="ALCDHDRGNASE"/>
</dbReference>
<dbReference type="PRINTS" id="PR01167">
    <property type="entry name" value="INSADHFAMILY"/>
</dbReference>
<dbReference type="PRINTS" id="PR00080">
    <property type="entry name" value="SDRFAMILY"/>
</dbReference>
<dbReference type="SUPFAM" id="SSF51735">
    <property type="entry name" value="NAD(P)-binding Rossmann-fold domains"/>
    <property type="match status" value="1"/>
</dbReference>
<dbReference type="PROSITE" id="PS00061">
    <property type="entry name" value="ADH_SHORT"/>
    <property type="match status" value="1"/>
</dbReference>
<feature type="initiator methionine" description="Removed">
    <location>
        <position position="1"/>
    </location>
</feature>
<feature type="chain" id="PRO_0000054466" description="Alcohol dehydrogenase 1">
    <location>
        <begin position="2"/>
        <end position="254"/>
    </location>
</feature>
<feature type="active site" description="Proton acceptor" evidence="2">
    <location>
        <position position="151"/>
    </location>
</feature>
<feature type="binding site" evidence="1">
    <location>
        <begin position="10"/>
        <end position="33"/>
    </location>
    <ligand>
        <name>NAD(+)</name>
        <dbReference type="ChEBI" id="CHEBI:57540"/>
    </ligand>
</feature>
<feature type="binding site" evidence="1">
    <location>
        <position position="138"/>
    </location>
    <ligand>
        <name>substrate</name>
    </ligand>
</feature>
<gene>
    <name type="primary">Adh1</name>
</gene>
<organism>
    <name type="scientific">Drosophila hydei</name>
    <name type="common">Fruit fly</name>
    <dbReference type="NCBI Taxonomy" id="7224"/>
    <lineage>
        <taxon>Eukaryota</taxon>
        <taxon>Metazoa</taxon>
        <taxon>Ecdysozoa</taxon>
        <taxon>Arthropoda</taxon>
        <taxon>Hexapoda</taxon>
        <taxon>Insecta</taxon>
        <taxon>Pterygota</taxon>
        <taxon>Neoptera</taxon>
        <taxon>Endopterygota</taxon>
        <taxon>Diptera</taxon>
        <taxon>Brachycera</taxon>
        <taxon>Muscomorpha</taxon>
        <taxon>Ephydroidea</taxon>
        <taxon>Drosophilidae</taxon>
        <taxon>Drosophila</taxon>
    </lineage>
</organism>
<accession>P23236</accession>
<protein>
    <recommendedName>
        <fullName>Alcohol dehydrogenase 1</fullName>
        <ecNumber>1.1.1.1</ecNumber>
    </recommendedName>
</protein>
<comment type="catalytic activity">
    <reaction evidence="2">
        <text>a primary alcohol + NAD(+) = an aldehyde + NADH + H(+)</text>
        <dbReference type="Rhea" id="RHEA:10736"/>
        <dbReference type="ChEBI" id="CHEBI:15378"/>
        <dbReference type="ChEBI" id="CHEBI:15734"/>
        <dbReference type="ChEBI" id="CHEBI:17478"/>
        <dbReference type="ChEBI" id="CHEBI:57540"/>
        <dbReference type="ChEBI" id="CHEBI:57945"/>
        <dbReference type="EC" id="1.1.1.1"/>
    </reaction>
</comment>
<comment type="catalytic activity">
    <reaction evidence="2">
        <text>a secondary alcohol + NAD(+) = a ketone + NADH + H(+)</text>
        <dbReference type="Rhea" id="RHEA:10740"/>
        <dbReference type="ChEBI" id="CHEBI:15378"/>
        <dbReference type="ChEBI" id="CHEBI:17087"/>
        <dbReference type="ChEBI" id="CHEBI:35681"/>
        <dbReference type="ChEBI" id="CHEBI:57540"/>
        <dbReference type="ChEBI" id="CHEBI:57945"/>
        <dbReference type="EC" id="1.1.1.1"/>
    </reaction>
</comment>
<comment type="subunit">
    <text>Homodimer.</text>
</comment>
<comment type="similarity">
    <text evidence="3">Belongs to the short-chain dehydrogenases/reductases (SDR) family.</text>
</comment>
<keyword id="KW-0520">NAD</keyword>
<keyword id="KW-0560">Oxidoreductase</keyword>
<proteinExistence type="inferred from homology"/>
<reference key="1">
    <citation type="journal article" date="1991" name="Genetics">
        <title>Characterization of the structure and evolution of the Adh region of Drosophila hydei.</title>
        <authorList>
            <person name="Menotti-Raymond M."/>
            <person name="Starmer W.T."/>
            <person name="Sullivan D.T."/>
        </authorList>
    </citation>
    <scope>NUCLEOTIDE SEQUENCE [GENOMIC DNA]</scope>
</reference>
<sequence length="254" mass="27401">MAIANKNIIFVAGLGGIGLDTSREIVKSGPKNLVILDRIDNPAAIAELKAINPKVTVTFYPYDVTVSVAESTKLLKVIFDKLKTVDLLINGAGILDDYQIERTIAVNFAGTVNTTTAIMAFWDKRKGGPGGVIANICSVTGFNAIYQVPVYSASKAAALSFTNSLAKLAPITGVTAYSINPGITKTTLVHKFNSWLDVEPRVAELLLEHPTQTSLQCAQNFVKAIEANQNGAIWKLDLGRLEAIEWTKHWDSGI</sequence>